<name>NPIID_ARTBC</name>
<keyword id="KW-0165">Cleavage on pair of basic residues</keyword>
<keyword id="KW-1015">Disulfide bond</keyword>
<keyword id="KW-0378">Hydrolase</keyword>
<keyword id="KW-0479">Metal-binding</keyword>
<keyword id="KW-0482">Metalloprotease</keyword>
<keyword id="KW-0645">Protease</keyword>
<keyword id="KW-1185">Reference proteome</keyword>
<keyword id="KW-0964">Secreted</keyword>
<keyword id="KW-0732">Signal</keyword>
<keyword id="KW-0843">Virulence</keyword>
<keyword id="KW-0862">Zinc</keyword>
<keyword id="KW-0865">Zymogen</keyword>
<protein>
    <recommendedName>
        <fullName>Probable neutral protease 2 homolog ARB_03949</fullName>
        <ecNumber>3.4.24.39</ecNumber>
    </recommendedName>
    <alternativeName>
        <fullName>Deuterolysin ARB_03949</fullName>
    </alternativeName>
</protein>
<feature type="signal peptide" evidence="2">
    <location>
        <begin position="1"/>
        <end position="19"/>
    </location>
</feature>
<feature type="propeptide" id="PRO_0000397750" evidence="1">
    <location>
        <begin position="20"/>
        <end position="188"/>
    </location>
</feature>
<feature type="chain" id="PRO_0000397751" description="Probable neutral protease 2 homolog ARB_03949">
    <location>
        <begin position="189"/>
        <end position="370"/>
    </location>
</feature>
<feature type="active site" evidence="3">
    <location>
        <position position="317"/>
    </location>
</feature>
<feature type="binding site" evidence="3">
    <location>
        <position position="316"/>
    </location>
    <ligand>
        <name>Zn(2+)</name>
        <dbReference type="ChEBI" id="CHEBI:29105"/>
        <note>catalytic</note>
    </ligand>
</feature>
<feature type="binding site" evidence="3">
    <location>
        <position position="320"/>
    </location>
    <ligand>
        <name>Zn(2+)</name>
        <dbReference type="ChEBI" id="CHEBI:29105"/>
        <note>catalytic</note>
    </ligand>
</feature>
<feature type="binding site" evidence="3">
    <location>
        <position position="331"/>
    </location>
    <ligand>
        <name>Zn(2+)</name>
        <dbReference type="ChEBI" id="CHEBI:29105"/>
        <note>catalytic</note>
    </ligand>
</feature>
<feature type="disulfide bond" evidence="1">
    <location>
        <begin position="196"/>
        <end position="267"/>
    </location>
</feature>
<feature type="disulfide bond" evidence="1">
    <location>
        <begin position="274"/>
        <end position="292"/>
    </location>
</feature>
<dbReference type="EC" id="3.4.24.39"/>
<dbReference type="EMBL" id="ABSU01000067">
    <property type="protein sequence ID" value="EFE29202.1"/>
    <property type="molecule type" value="Genomic_DNA"/>
</dbReference>
<dbReference type="RefSeq" id="XP_003009847.1">
    <property type="nucleotide sequence ID" value="XM_003009801.1"/>
</dbReference>
<dbReference type="SMR" id="D4B639"/>
<dbReference type="STRING" id="663331.D4B639"/>
<dbReference type="MEROPS" id="M35.001"/>
<dbReference type="GeneID" id="9525189"/>
<dbReference type="KEGG" id="abe:ARB_03949"/>
<dbReference type="eggNOG" id="ENOG502SGF5">
    <property type="taxonomic scope" value="Eukaryota"/>
</dbReference>
<dbReference type="HOGENOM" id="CLU_039313_1_0_1"/>
<dbReference type="OMA" id="NEIANCD"/>
<dbReference type="Proteomes" id="UP000008866">
    <property type="component" value="Unassembled WGS sequence"/>
</dbReference>
<dbReference type="GO" id="GO:0005576">
    <property type="term" value="C:extracellular region"/>
    <property type="evidence" value="ECO:0007669"/>
    <property type="project" value="UniProtKB-SubCell"/>
</dbReference>
<dbReference type="GO" id="GO:0046872">
    <property type="term" value="F:metal ion binding"/>
    <property type="evidence" value="ECO:0007669"/>
    <property type="project" value="UniProtKB-KW"/>
</dbReference>
<dbReference type="GO" id="GO:0004222">
    <property type="term" value="F:metalloendopeptidase activity"/>
    <property type="evidence" value="ECO:0007669"/>
    <property type="project" value="InterPro"/>
</dbReference>
<dbReference type="GO" id="GO:0006508">
    <property type="term" value="P:proteolysis"/>
    <property type="evidence" value="ECO:0007669"/>
    <property type="project" value="UniProtKB-KW"/>
</dbReference>
<dbReference type="CDD" id="cd11008">
    <property type="entry name" value="M35_deuterolysin_like"/>
    <property type="match status" value="1"/>
</dbReference>
<dbReference type="Gene3D" id="2.60.40.2970">
    <property type="match status" value="1"/>
</dbReference>
<dbReference type="Gene3D" id="3.40.390.10">
    <property type="entry name" value="Collagenase (Catalytic Domain)"/>
    <property type="match status" value="1"/>
</dbReference>
<dbReference type="InterPro" id="IPR050414">
    <property type="entry name" value="Fungal_M35_metalloproteases"/>
</dbReference>
<dbReference type="InterPro" id="IPR024079">
    <property type="entry name" value="MetalloPept_cat_dom_sf"/>
</dbReference>
<dbReference type="InterPro" id="IPR001384">
    <property type="entry name" value="Peptidase_M35"/>
</dbReference>
<dbReference type="PANTHER" id="PTHR37016">
    <property type="match status" value="1"/>
</dbReference>
<dbReference type="PANTHER" id="PTHR37016:SF3">
    <property type="entry name" value="NEUTRAL PROTEASE 2-RELATED"/>
    <property type="match status" value="1"/>
</dbReference>
<dbReference type="Pfam" id="PF02102">
    <property type="entry name" value="Peptidase_M35"/>
    <property type="match status" value="1"/>
</dbReference>
<dbReference type="PRINTS" id="PR00768">
    <property type="entry name" value="DEUTEROLYSIN"/>
</dbReference>
<dbReference type="SUPFAM" id="SSF55486">
    <property type="entry name" value="Metalloproteases ('zincins'), catalytic domain"/>
    <property type="match status" value="1"/>
</dbReference>
<dbReference type="PROSITE" id="PS00142">
    <property type="entry name" value="ZINC_PROTEASE"/>
    <property type="match status" value="1"/>
</dbReference>
<accession>D4B639</accession>
<gene>
    <name type="ORF">ARB_03949</name>
</gene>
<comment type="function">
    <text evidence="1">Probable secreted metalloprotease that shows high activities on basic nuclear substrates such as histone and protamine (By similarity). May be involved in virulence.</text>
</comment>
<comment type="catalytic activity">
    <reaction>
        <text>Preferential cleavage of bonds with hydrophobic residues in P1'. Also 3-Asn-|-Gln-4 and 8-Gly-|-Ser-9 bonds in insulin B chain.</text>
        <dbReference type="EC" id="3.4.24.39"/>
    </reaction>
</comment>
<comment type="cofactor">
    <cofactor evidence="1">
        <name>Zn(2+)</name>
        <dbReference type="ChEBI" id="CHEBI:29105"/>
    </cofactor>
    <text evidence="1">Binds 1 zinc ion per subunit.</text>
</comment>
<comment type="subcellular location">
    <subcellularLocation>
        <location evidence="4">Secreted</location>
    </subcellularLocation>
</comment>
<comment type="similarity">
    <text evidence="4">Belongs to the peptidase M35 family.</text>
</comment>
<reference key="1">
    <citation type="journal article" date="2011" name="Genome Biol.">
        <title>Comparative and functional genomics provide insights into the pathogenicity of dermatophytic fungi.</title>
        <authorList>
            <person name="Burmester A."/>
            <person name="Shelest E."/>
            <person name="Gloeckner G."/>
            <person name="Heddergott C."/>
            <person name="Schindler S."/>
            <person name="Staib P."/>
            <person name="Heidel A."/>
            <person name="Felder M."/>
            <person name="Petzold A."/>
            <person name="Szafranski K."/>
            <person name="Feuermann M."/>
            <person name="Pedruzzi I."/>
            <person name="Priebe S."/>
            <person name="Groth M."/>
            <person name="Winkler R."/>
            <person name="Li W."/>
            <person name="Kniemeyer O."/>
            <person name="Schroeckh V."/>
            <person name="Hertweck C."/>
            <person name="Hube B."/>
            <person name="White T.C."/>
            <person name="Platzer M."/>
            <person name="Guthke R."/>
            <person name="Heitman J."/>
            <person name="Woestemeyer J."/>
            <person name="Zipfel P.F."/>
            <person name="Monod M."/>
            <person name="Brakhage A.A."/>
        </authorList>
    </citation>
    <scope>NUCLEOTIDE SEQUENCE [LARGE SCALE GENOMIC DNA]</scope>
    <source>
        <strain>ATCC MYA-4681 / CBS 112371</strain>
    </source>
</reference>
<sequence length="370" mass="40065">MQLVAALAALGALVAPAVAYPHAPMNETLVDVQLTAVGNTMVKATITNKGDSVLNMLKFNTIMDENPTRKVMVFQDGAEVPFTGMMPRYLMSDLTEEFFTTLAPQASVEHSFDIATTHDLSAGGKYVISASGAIPTAEEYSTTITSTALYESNELHMEIDGTQAAAVEQAMKFTPEMQSIHSRALQKRTKIVGGSCNQNTLRATQNALGNSARLAQAASRAASQNAAKFQEYFRTNDANAKQRVIARLNSVARESSSANGGSTTYYCSDTMGGCKPRVLAYTLPSRNLVVNCPIYYNLPPLTKQCHAQDQATTTLHEFTHNPAVASPHCQDYAYGYQQCISLPAAKAVQNADNYALFANGMFYSLFTIIF</sequence>
<organism>
    <name type="scientific">Arthroderma benhamiae (strain ATCC MYA-4681 / CBS 112371)</name>
    <name type="common">Trichophyton mentagrophytes</name>
    <dbReference type="NCBI Taxonomy" id="663331"/>
    <lineage>
        <taxon>Eukaryota</taxon>
        <taxon>Fungi</taxon>
        <taxon>Dikarya</taxon>
        <taxon>Ascomycota</taxon>
        <taxon>Pezizomycotina</taxon>
        <taxon>Eurotiomycetes</taxon>
        <taxon>Eurotiomycetidae</taxon>
        <taxon>Onygenales</taxon>
        <taxon>Arthrodermataceae</taxon>
        <taxon>Trichophyton</taxon>
    </lineage>
</organism>
<proteinExistence type="inferred from homology"/>
<evidence type="ECO:0000250" key="1"/>
<evidence type="ECO:0000255" key="2"/>
<evidence type="ECO:0000255" key="3">
    <source>
        <dbReference type="PROSITE-ProRule" id="PRU10095"/>
    </source>
</evidence>
<evidence type="ECO:0000305" key="4"/>